<dbReference type="EC" id="3.2.1.18" evidence="1"/>
<dbReference type="EMBL" id="CY020447">
    <property type="protein sequence ID" value="ABO38354.1"/>
    <property type="molecule type" value="Viral_cRNA"/>
</dbReference>
<dbReference type="SMR" id="A4GCI9"/>
<dbReference type="CAZy" id="GH34">
    <property type="family name" value="Glycoside Hydrolase Family 34"/>
</dbReference>
<dbReference type="GlyCosmos" id="A4GCI9">
    <property type="glycosylation" value="8 sites, No reported glycans"/>
</dbReference>
<dbReference type="PRO" id="PR:A4GCI9"/>
<dbReference type="Proteomes" id="UP000008213">
    <property type="component" value="Genome"/>
</dbReference>
<dbReference type="GO" id="GO:0020002">
    <property type="term" value="C:host cell plasma membrane"/>
    <property type="evidence" value="ECO:0007669"/>
    <property type="project" value="UniProtKB-SubCell"/>
</dbReference>
<dbReference type="GO" id="GO:0016020">
    <property type="term" value="C:membrane"/>
    <property type="evidence" value="ECO:0007669"/>
    <property type="project" value="UniProtKB-UniRule"/>
</dbReference>
<dbReference type="GO" id="GO:0055036">
    <property type="term" value="C:virion membrane"/>
    <property type="evidence" value="ECO:0007669"/>
    <property type="project" value="UniProtKB-SubCell"/>
</dbReference>
<dbReference type="GO" id="GO:0004308">
    <property type="term" value="F:exo-alpha-sialidase activity"/>
    <property type="evidence" value="ECO:0007669"/>
    <property type="project" value="UniProtKB-UniRule"/>
</dbReference>
<dbReference type="GO" id="GO:0046872">
    <property type="term" value="F:metal ion binding"/>
    <property type="evidence" value="ECO:0007669"/>
    <property type="project" value="UniProtKB-UniRule"/>
</dbReference>
<dbReference type="GO" id="GO:0005975">
    <property type="term" value="P:carbohydrate metabolic process"/>
    <property type="evidence" value="ECO:0007669"/>
    <property type="project" value="InterPro"/>
</dbReference>
<dbReference type="GO" id="GO:0046761">
    <property type="term" value="P:viral budding from plasma membrane"/>
    <property type="evidence" value="ECO:0007669"/>
    <property type="project" value="UniProtKB-UniRule"/>
</dbReference>
<dbReference type="CDD" id="cd15483">
    <property type="entry name" value="Influenza_NA"/>
    <property type="match status" value="1"/>
</dbReference>
<dbReference type="FunFam" id="2.120.10.10:FF:000001">
    <property type="entry name" value="Neuraminidase"/>
    <property type="match status" value="1"/>
</dbReference>
<dbReference type="Gene3D" id="2.120.10.10">
    <property type="match status" value="1"/>
</dbReference>
<dbReference type="HAMAP" id="MF_04071">
    <property type="entry name" value="INFV_NRAM"/>
    <property type="match status" value="1"/>
</dbReference>
<dbReference type="InterPro" id="IPR001860">
    <property type="entry name" value="Glyco_hydro_34"/>
</dbReference>
<dbReference type="InterPro" id="IPR033654">
    <property type="entry name" value="Sialidase_Influenza_A/B"/>
</dbReference>
<dbReference type="InterPro" id="IPR036278">
    <property type="entry name" value="Sialidase_sf"/>
</dbReference>
<dbReference type="Pfam" id="PF00064">
    <property type="entry name" value="Neur"/>
    <property type="match status" value="1"/>
</dbReference>
<dbReference type="SUPFAM" id="SSF50939">
    <property type="entry name" value="Sialidases"/>
    <property type="match status" value="1"/>
</dbReference>
<accession>A4GCI9</accession>
<organism>
    <name type="scientific">Influenza A virus (strain A/Henry/1936 H1N1)</name>
    <dbReference type="NCBI Taxonomy" id="425562"/>
    <lineage>
        <taxon>Viruses</taxon>
        <taxon>Riboviria</taxon>
        <taxon>Orthornavirae</taxon>
        <taxon>Negarnaviricota</taxon>
        <taxon>Polyploviricotina</taxon>
        <taxon>Insthoviricetes</taxon>
        <taxon>Articulavirales</taxon>
        <taxon>Orthomyxoviridae</taxon>
        <taxon>Alphainfluenzavirus</taxon>
        <taxon>Alphainfluenzavirus influenzae</taxon>
        <taxon>Influenza A virus</taxon>
    </lineage>
</organism>
<name>NRAM_I36A0</name>
<comment type="function">
    <text evidence="1">Catalyzes the removal of terminal sialic acid residues from viral and cellular glycoconjugates. Cleaves off the terminal sialic acids on the glycosylated HA during virus budding to facilitate virus release. Additionally helps virus spread through the circulation by further removing sialic acids from the cell surface. These cleavages prevent self-aggregation and ensure the efficient spread of the progeny virus from cell to cell. Otherwise, infection would be limited to one round of replication. Described as a receptor-destroying enzyme because it cleaves a terminal sialic acid from the cellular receptors. May facilitate viral invasion of the upper airways by cleaving the sialic acid moieties on the mucin of the airway epithelial cells. Likely to plays a role in the budding process through its association with lipid rafts during intracellular transport. May additionally display a raft-association independent effect on budding. Plays a role in the determination of host range restriction on replication and virulence. Sialidase activity in late endosome/lysosome traffic seems to enhance virus replication.</text>
</comment>
<comment type="catalytic activity">
    <reaction evidence="1">
        <text>Hydrolysis of alpha-(2-&gt;3)-, alpha-(2-&gt;6)-, alpha-(2-&gt;8)- glycosidic linkages of terminal sialic acid residues in oligosaccharides, glycoproteins, glycolipids, colominic acid and synthetic substrates.</text>
        <dbReference type="EC" id="3.2.1.18"/>
    </reaction>
</comment>
<comment type="cofactor">
    <cofactor evidence="1">
        <name>Ca(2+)</name>
        <dbReference type="ChEBI" id="CHEBI:29108"/>
    </cofactor>
</comment>
<comment type="activity regulation">
    <text evidence="1">Inhibited by the neuraminidase inhibitors zanamivir (Relenza) and oseltamivir (Tamiflu). These drugs interfere with the release of progeny virus from infected cells and are effective against all influenza strains. Resistance to neuraminidase inhibitors is quite rare.</text>
</comment>
<comment type="subunit">
    <text evidence="1">Homotetramer.</text>
</comment>
<comment type="subcellular location">
    <subcellularLocation>
        <location evidence="1">Virion membrane</location>
    </subcellularLocation>
    <subcellularLocation>
        <location evidence="1">Host apical cell membrane</location>
        <topology evidence="1">Single-pass type II membrane protein</topology>
    </subcellularLocation>
    <text evidence="1">Preferentially accumulates at the apical plasma membrane in infected polarized epithelial cells, which is the virus assembly site. Uses lipid rafts for cell surface transport and apical sorting. In the virion, forms a mushroom-shaped spike on the surface of the membrane.</text>
</comment>
<comment type="domain">
    <text evidence="1">Intact N-terminus is essential for virion morphogenesis. Possesses two apical sorting signals, one in the ectodomain, which is likely to be a glycan, and the other in the transmembrane domain. The transmembrane domain also plays a role in lipid raft association.</text>
</comment>
<comment type="PTM">
    <text evidence="1">N-glycosylated.</text>
</comment>
<comment type="miscellaneous">
    <text>The influenza A genome consist of 8 RNA segments. Genetic variation of hemagglutinin and/or neuraminidase genes results in the emergence of new influenza strains. The mechanism of variation can be the result of point mutations or the result of genetic reassortment between segments of two different strains.</text>
</comment>
<comment type="similarity">
    <text evidence="1">Belongs to the glycosyl hydrolase 34 family.</text>
</comment>
<organismHost>
    <name type="scientific">Aves</name>
    <dbReference type="NCBI Taxonomy" id="8782"/>
</organismHost>
<organismHost>
    <name type="scientific">Homo sapiens</name>
    <name type="common">Human</name>
    <dbReference type="NCBI Taxonomy" id="9606"/>
</organismHost>
<organismHost>
    <name type="scientific">Sus scrofa</name>
    <name type="common">Pig</name>
    <dbReference type="NCBI Taxonomy" id="9823"/>
</organismHost>
<gene>
    <name evidence="1" type="primary">NA</name>
</gene>
<proteinExistence type="inferred from homology"/>
<feature type="chain" id="PRO_0000372965" description="Neuraminidase">
    <location>
        <begin position="1"/>
        <end position="469"/>
    </location>
</feature>
<feature type="topological domain" description="Intravirion" evidence="1">
    <location>
        <begin position="1"/>
        <end position="6"/>
    </location>
</feature>
<feature type="transmembrane region" description="Helical" evidence="1">
    <location>
        <begin position="7"/>
        <end position="27"/>
    </location>
</feature>
<feature type="topological domain" description="Virion surface" evidence="1">
    <location>
        <begin position="28"/>
        <end position="469"/>
    </location>
</feature>
<feature type="region of interest" description="Involved in apical transport and lipid raft association" evidence="1">
    <location>
        <begin position="11"/>
        <end position="33"/>
    </location>
</feature>
<feature type="region of interest" description="Hypervariable stalk region" evidence="1">
    <location>
        <begin position="36"/>
        <end position="90"/>
    </location>
</feature>
<feature type="region of interest" description="Head of neuraminidase" evidence="1">
    <location>
        <begin position="91"/>
        <end position="469"/>
    </location>
</feature>
<feature type="active site" description="Proton donor/acceptor" evidence="1">
    <location>
        <position position="151"/>
    </location>
</feature>
<feature type="active site" description="Nucleophile" evidence="1">
    <location>
        <position position="402"/>
    </location>
</feature>
<feature type="binding site" evidence="1">
    <location>
        <position position="118"/>
    </location>
    <ligand>
        <name>substrate</name>
    </ligand>
</feature>
<feature type="binding site" evidence="1">
    <location>
        <position position="152"/>
    </location>
    <ligand>
        <name>substrate</name>
    </ligand>
</feature>
<feature type="binding site" evidence="1">
    <location>
        <begin position="277"/>
        <end position="278"/>
    </location>
    <ligand>
        <name>substrate</name>
    </ligand>
</feature>
<feature type="binding site" evidence="1">
    <location>
        <position position="293"/>
    </location>
    <ligand>
        <name>substrate</name>
    </ligand>
</feature>
<feature type="binding site" evidence="1">
    <location>
        <position position="294"/>
    </location>
    <ligand>
        <name>Ca(2+)</name>
        <dbReference type="ChEBI" id="CHEBI:29108"/>
    </ligand>
</feature>
<feature type="binding site" evidence="1">
    <location>
        <position position="298"/>
    </location>
    <ligand>
        <name>Ca(2+)</name>
        <dbReference type="ChEBI" id="CHEBI:29108"/>
    </ligand>
</feature>
<feature type="binding site" evidence="1">
    <location>
        <position position="324"/>
    </location>
    <ligand>
        <name>Ca(2+)</name>
        <dbReference type="ChEBI" id="CHEBI:29108"/>
    </ligand>
</feature>
<feature type="binding site" evidence="1">
    <location>
        <position position="344"/>
    </location>
    <ligand>
        <name>Ca(2+)</name>
        <dbReference type="ChEBI" id="CHEBI:29108"/>
    </ligand>
</feature>
<feature type="binding site" evidence="1">
    <location>
        <position position="368"/>
    </location>
    <ligand>
        <name>substrate</name>
    </ligand>
</feature>
<feature type="glycosylation site" description="N-linked (GlcNAc...) asparagine; by host" evidence="1">
    <location>
        <position position="44"/>
    </location>
</feature>
<feature type="glycosylation site" description="N-linked (GlcNAc...) asparagine; by host" evidence="1">
    <location>
        <position position="58"/>
    </location>
</feature>
<feature type="glycosylation site" description="N-linked (GlcNAc...) asparagine; by host" evidence="1">
    <location>
        <position position="63"/>
    </location>
</feature>
<feature type="glycosylation site" description="N-linked (GlcNAc...) asparagine; by host" evidence="1">
    <location>
        <position position="68"/>
    </location>
</feature>
<feature type="glycosylation site" description="N-linked (GlcNAc...) asparagine; by host" evidence="1">
    <location>
        <position position="88"/>
    </location>
</feature>
<feature type="glycosylation site" description="N-linked (GlcNAc...) asparagine; by host" evidence="1">
    <location>
        <position position="146"/>
    </location>
</feature>
<feature type="glycosylation site" description="N-linked (GlcNAc...) asparagine; by host" evidence="1">
    <location>
        <position position="235"/>
    </location>
</feature>
<feature type="glycosylation site" description="N-linked (GlcNAc...) asparagine; by host" evidence="1">
    <location>
        <position position="365"/>
    </location>
</feature>
<feature type="disulfide bond" evidence="1">
    <location>
        <begin position="92"/>
        <end position="417"/>
    </location>
</feature>
<feature type="disulfide bond" evidence="1">
    <location>
        <begin position="124"/>
        <end position="129"/>
    </location>
</feature>
<feature type="disulfide bond" evidence="1">
    <location>
        <begin position="184"/>
        <end position="231"/>
    </location>
</feature>
<feature type="disulfide bond" evidence="1">
    <location>
        <begin position="233"/>
        <end position="238"/>
    </location>
</feature>
<feature type="disulfide bond" evidence="1">
    <location>
        <begin position="279"/>
        <end position="292"/>
    </location>
</feature>
<feature type="disulfide bond" evidence="1">
    <location>
        <begin position="281"/>
        <end position="290"/>
    </location>
</feature>
<feature type="disulfide bond" evidence="1">
    <location>
        <begin position="318"/>
        <end position="335"/>
    </location>
</feature>
<feature type="disulfide bond" evidence="1">
    <location>
        <begin position="421"/>
        <end position="446"/>
    </location>
</feature>
<keyword id="KW-0106">Calcium</keyword>
<keyword id="KW-1015">Disulfide bond</keyword>
<keyword id="KW-0325">Glycoprotein</keyword>
<keyword id="KW-0326">Glycosidase</keyword>
<keyword id="KW-1032">Host cell membrane</keyword>
<keyword id="KW-1043">Host membrane</keyword>
<keyword id="KW-0378">Hydrolase</keyword>
<keyword id="KW-0472">Membrane</keyword>
<keyword id="KW-0479">Metal-binding</keyword>
<keyword id="KW-0735">Signal-anchor</keyword>
<keyword id="KW-0812">Transmembrane</keyword>
<keyword id="KW-1133">Transmembrane helix</keyword>
<keyword id="KW-0946">Virion</keyword>
<evidence type="ECO:0000255" key="1">
    <source>
        <dbReference type="HAMAP-Rule" id="MF_04071"/>
    </source>
</evidence>
<sequence length="469" mass="51703">MNPNQKIITIGSICMVVGIISLILQIGNIISIWISHSIQTGSQNHTGICNQNIITYKNSTWVNQTYVNISNTNVVAGQDTTSVILTGNSSLCPIRGWAIYSKDNSIRIGSKGDVFVIREPFISCSHLECRTFFLTQGALLNDRHSNGTVKDRSPYRALMSCPVGEAPSPYNSRFESVAWSASACHDGMGWLTIGISGPDNGAVAVLKYNGIITETIKSWRKKILRTQESECACVNGSCFTIMTDGPSNGLASYKIFKIEKGKVTKSIELNAPNSHYEECSCYPDTGKVMCVCRDNWHGSNRPWVSFDQNLDYQIGYICSGVFGDNPRPKDGTGSCGPVYVDGANGVKGFSYRYGNGVWIGRTKSNSSRHGFEMIWDPNGWTETDSKFSVRQDVVAMTDWSGYSGSFVQHPELTGLDCMRPCFWVELIRGRPKENTIWTSGSSISFCGVNSDTVDWSWPDGAELPFTIDK</sequence>
<protein>
    <recommendedName>
        <fullName evidence="1">Neuraminidase</fullName>
        <ecNumber evidence="1">3.2.1.18</ecNumber>
    </recommendedName>
</protein>
<reference key="1">
    <citation type="submission" date="2007-03" db="EMBL/GenBank/DDBJ databases">
        <title>The NIAID influenza genome sequencing project.</title>
        <authorList>
            <person name="Ghedin E."/>
            <person name="Spiro D."/>
            <person name="Miller N."/>
            <person name="Zaborsky J."/>
            <person name="Feldblyum T."/>
            <person name="Subbu V."/>
            <person name="Shumway M."/>
            <person name="Sparenborg J."/>
            <person name="Groveman L."/>
            <person name="Halpin R."/>
            <person name="Sitz J."/>
            <person name="Koo H."/>
            <person name="Salzberg S.L."/>
            <person name="Webster R.G."/>
            <person name="Hoffmann E."/>
            <person name="Krauss S."/>
            <person name="Naeve C."/>
            <person name="Bao Y."/>
            <person name="Bolotov P."/>
            <person name="Dernovoy D."/>
            <person name="Kiryutin B."/>
            <person name="Lipman D.J."/>
            <person name="Tatusova T."/>
        </authorList>
    </citation>
    <scope>NUCLEOTIDE SEQUENCE [GENOMIC RNA]</scope>
</reference>
<reference key="2">
    <citation type="submission" date="2007-03" db="EMBL/GenBank/DDBJ databases">
        <authorList>
            <consortium name="The NIAID Influenza Genome Sequencing Consortium"/>
        </authorList>
    </citation>
    <scope>NUCLEOTIDE SEQUENCE [GENOMIC RNA]</scope>
</reference>